<keyword id="KW-0028">Amino-acid biosynthesis</keyword>
<keyword id="KW-0067">ATP-binding</keyword>
<keyword id="KW-0963">Cytoplasm</keyword>
<keyword id="KW-0328">Glycosyltransferase</keyword>
<keyword id="KW-0368">Histidine biosynthesis</keyword>
<keyword id="KW-0547">Nucleotide-binding</keyword>
<keyword id="KW-0808">Transferase</keyword>
<gene>
    <name evidence="1" type="primary">hisG</name>
    <name type="ordered locus">BamMC406_0351</name>
</gene>
<name>HIS1_BURA4</name>
<protein>
    <recommendedName>
        <fullName evidence="1">ATP phosphoribosyltransferase</fullName>
        <shortName evidence="1">ATP-PRT</shortName>
        <shortName evidence="1">ATP-PRTase</shortName>
        <ecNumber evidence="1">2.4.2.17</ecNumber>
    </recommendedName>
</protein>
<comment type="function">
    <text evidence="1">Catalyzes the condensation of ATP and 5-phosphoribose 1-diphosphate to form N'-(5'-phosphoribosyl)-ATP (PR-ATP). Has a crucial role in the pathway because the rate of histidine biosynthesis seems to be controlled primarily by regulation of HisG enzymatic activity.</text>
</comment>
<comment type="catalytic activity">
    <reaction evidence="1">
        <text>1-(5-phospho-beta-D-ribosyl)-ATP + diphosphate = 5-phospho-alpha-D-ribose 1-diphosphate + ATP</text>
        <dbReference type="Rhea" id="RHEA:18473"/>
        <dbReference type="ChEBI" id="CHEBI:30616"/>
        <dbReference type="ChEBI" id="CHEBI:33019"/>
        <dbReference type="ChEBI" id="CHEBI:58017"/>
        <dbReference type="ChEBI" id="CHEBI:73183"/>
        <dbReference type="EC" id="2.4.2.17"/>
    </reaction>
</comment>
<comment type="pathway">
    <text evidence="1">Amino-acid biosynthesis; L-histidine biosynthesis; L-histidine from 5-phospho-alpha-D-ribose 1-diphosphate: step 1/9.</text>
</comment>
<comment type="subunit">
    <text evidence="1">Heteromultimer composed of HisG and HisZ subunits.</text>
</comment>
<comment type="subcellular location">
    <subcellularLocation>
        <location evidence="1">Cytoplasm</location>
    </subcellularLocation>
</comment>
<comment type="domain">
    <text>Lacks the C-terminal regulatory region which is replaced by HisZ.</text>
</comment>
<comment type="similarity">
    <text evidence="1">Belongs to the ATP phosphoribosyltransferase family. Short subfamily.</text>
</comment>
<feature type="chain" id="PRO_1000135272" description="ATP phosphoribosyltransferase">
    <location>
        <begin position="1"/>
        <end position="217"/>
    </location>
</feature>
<dbReference type="EC" id="2.4.2.17" evidence="1"/>
<dbReference type="EMBL" id="CP001025">
    <property type="protein sequence ID" value="ACB62852.1"/>
    <property type="molecule type" value="Genomic_DNA"/>
</dbReference>
<dbReference type="RefSeq" id="WP_006751807.1">
    <property type="nucleotide sequence ID" value="NC_010551.1"/>
</dbReference>
<dbReference type="SMR" id="B1YRV4"/>
<dbReference type="GeneID" id="93084244"/>
<dbReference type="KEGG" id="bac:BamMC406_0351"/>
<dbReference type="HOGENOM" id="CLU_038115_2_0_4"/>
<dbReference type="OrthoDB" id="9801867at2"/>
<dbReference type="UniPathway" id="UPA00031">
    <property type="reaction ID" value="UER00006"/>
</dbReference>
<dbReference type="Proteomes" id="UP000001680">
    <property type="component" value="Chromosome 1"/>
</dbReference>
<dbReference type="GO" id="GO:0005737">
    <property type="term" value="C:cytoplasm"/>
    <property type="evidence" value="ECO:0007669"/>
    <property type="project" value="UniProtKB-SubCell"/>
</dbReference>
<dbReference type="GO" id="GO:0005524">
    <property type="term" value="F:ATP binding"/>
    <property type="evidence" value="ECO:0007669"/>
    <property type="project" value="UniProtKB-KW"/>
</dbReference>
<dbReference type="GO" id="GO:0003879">
    <property type="term" value="F:ATP phosphoribosyltransferase activity"/>
    <property type="evidence" value="ECO:0007669"/>
    <property type="project" value="UniProtKB-UniRule"/>
</dbReference>
<dbReference type="GO" id="GO:0000105">
    <property type="term" value="P:L-histidine biosynthetic process"/>
    <property type="evidence" value="ECO:0007669"/>
    <property type="project" value="UniProtKB-UniRule"/>
</dbReference>
<dbReference type="CDD" id="cd13595">
    <property type="entry name" value="PBP2_HisGs"/>
    <property type="match status" value="1"/>
</dbReference>
<dbReference type="FunFam" id="3.40.190.10:FF:000011">
    <property type="entry name" value="ATP phosphoribosyltransferase"/>
    <property type="match status" value="1"/>
</dbReference>
<dbReference type="Gene3D" id="3.40.190.10">
    <property type="entry name" value="Periplasmic binding protein-like II"/>
    <property type="match status" value="2"/>
</dbReference>
<dbReference type="HAMAP" id="MF_01018">
    <property type="entry name" value="HisG_Short"/>
    <property type="match status" value="1"/>
</dbReference>
<dbReference type="InterPro" id="IPR013820">
    <property type="entry name" value="ATP_PRibTrfase_cat"/>
</dbReference>
<dbReference type="InterPro" id="IPR018198">
    <property type="entry name" value="ATP_PRibTrfase_CS"/>
</dbReference>
<dbReference type="InterPro" id="IPR001348">
    <property type="entry name" value="ATP_PRibTrfase_HisG"/>
</dbReference>
<dbReference type="InterPro" id="IPR024893">
    <property type="entry name" value="ATP_PRibTrfase_HisG_short"/>
</dbReference>
<dbReference type="NCBIfam" id="TIGR00070">
    <property type="entry name" value="hisG"/>
    <property type="match status" value="1"/>
</dbReference>
<dbReference type="PANTHER" id="PTHR21403:SF8">
    <property type="entry name" value="ATP PHOSPHORIBOSYLTRANSFERASE"/>
    <property type="match status" value="1"/>
</dbReference>
<dbReference type="PANTHER" id="PTHR21403">
    <property type="entry name" value="ATP PHOSPHORIBOSYLTRANSFERASE ATP-PRTASE"/>
    <property type="match status" value="1"/>
</dbReference>
<dbReference type="Pfam" id="PF01634">
    <property type="entry name" value="HisG"/>
    <property type="match status" value="1"/>
</dbReference>
<dbReference type="SUPFAM" id="SSF53850">
    <property type="entry name" value="Periplasmic binding protein-like II"/>
    <property type="match status" value="1"/>
</dbReference>
<dbReference type="PROSITE" id="PS01316">
    <property type="entry name" value="ATP_P_PHORIBOSYLTR"/>
    <property type="match status" value="1"/>
</dbReference>
<proteinExistence type="inferred from homology"/>
<accession>B1YRV4</accession>
<sequence>MTAPLTLALSKGRIFEETLPLLAAAGVQVAEDPETSRKLILPTTDPNLRVIIVRASDVPTYVEYGAADFGVAGKDVLVEHGGSGLYQPIDLNIARCRMSVAVPAGFDYANAVRQGARLRVATKYVETAREHFAAKGVHVDLIKLYGSMELAPLVGLADAIVDLVSSGGTLKANNLVEVEEIMAISSRLVVNQAALKLKRAALKPILDAFERASQNGN</sequence>
<reference key="1">
    <citation type="submission" date="2008-04" db="EMBL/GenBank/DDBJ databases">
        <title>Complete sequence of chromosome 1 of Burkholderia ambifaria MC40-6.</title>
        <authorList>
            <person name="Copeland A."/>
            <person name="Lucas S."/>
            <person name="Lapidus A."/>
            <person name="Glavina del Rio T."/>
            <person name="Dalin E."/>
            <person name="Tice H."/>
            <person name="Pitluck S."/>
            <person name="Chain P."/>
            <person name="Malfatti S."/>
            <person name="Shin M."/>
            <person name="Vergez L."/>
            <person name="Lang D."/>
            <person name="Schmutz J."/>
            <person name="Larimer F."/>
            <person name="Land M."/>
            <person name="Hauser L."/>
            <person name="Kyrpides N."/>
            <person name="Lykidis A."/>
            <person name="Ramette A."/>
            <person name="Konstantinidis K."/>
            <person name="Tiedje J."/>
            <person name="Richardson P."/>
        </authorList>
    </citation>
    <scope>NUCLEOTIDE SEQUENCE [LARGE SCALE GENOMIC DNA]</scope>
    <source>
        <strain>MC40-6</strain>
    </source>
</reference>
<organism>
    <name type="scientific">Burkholderia ambifaria (strain MC40-6)</name>
    <dbReference type="NCBI Taxonomy" id="398577"/>
    <lineage>
        <taxon>Bacteria</taxon>
        <taxon>Pseudomonadati</taxon>
        <taxon>Pseudomonadota</taxon>
        <taxon>Betaproteobacteria</taxon>
        <taxon>Burkholderiales</taxon>
        <taxon>Burkholderiaceae</taxon>
        <taxon>Burkholderia</taxon>
        <taxon>Burkholderia cepacia complex</taxon>
    </lineage>
</organism>
<evidence type="ECO:0000255" key="1">
    <source>
        <dbReference type="HAMAP-Rule" id="MF_01018"/>
    </source>
</evidence>